<gene>
    <name evidence="1" type="primary">nusB</name>
    <name type="ordered locus">gbs1737</name>
</gene>
<proteinExistence type="inferred from homology"/>
<accession>P65580</accession>
<accession>Q8DY01</accession>
<accession>Q8E3M0</accession>
<reference key="1">
    <citation type="journal article" date="2002" name="Mol. Microbiol.">
        <title>Genome sequence of Streptococcus agalactiae, a pathogen causing invasive neonatal disease.</title>
        <authorList>
            <person name="Glaser P."/>
            <person name="Rusniok C."/>
            <person name="Buchrieser C."/>
            <person name="Chevalier F."/>
            <person name="Frangeul L."/>
            <person name="Msadek T."/>
            <person name="Zouine M."/>
            <person name="Couve E."/>
            <person name="Lalioui L."/>
            <person name="Poyart C."/>
            <person name="Trieu-Cuot P."/>
            <person name="Kunst F."/>
        </authorList>
    </citation>
    <scope>NUCLEOTIDE SEQUENCE [LARGE SCALE GENOMIC DNA]</scope>
    <source>
        <strain>NEM316</strain>
    </source>
</reference>
<dbReference type="EMBL" id="AL766852">
    <property type="protein sequence ID" value="CAD47396.1"/>
    <property type="molecule type" value="Genomic_DNA"/>
</dbReference>
<dbReference type="RefSeq" id="WP_000204940.1">
    <property type="nucleotide sequence ID" value="NC_004368.1"/>
</dbReference>
<dbReference type="SMR" id="P65580"/>
<dbReference type="GeneID" id="66886539"/>
<dbReference type="KEGG" id="san:gbs1737"/>
<dbReference type="eggNOG" id="COG0781">
    <property type="taxonomic scope" value="Bacteria"/>
</dbReference>
<dbReference type="HOGENOM" id="CLU_087843_3_2_9"/>
<dbReference type="Proteomes" id="UP000000823">
    <property type="component" value="Chromosome"/>
</dbReference>
<dbReference type="GO" id="GO:0005829">
    <property type="term" value="C:cytosol"/>
    <property type="evidence" value="ECO:0007669"/>
    <property type="project" value="TreeGrafter"/>
</dbReference>
<dbReference type="GO" id="GO:0003723">
    <property type="term" value="F:RNA binding"/>
    <property type="evidence" value="ECO:0007669"/>
    <property type="project" value="UniProtKB-UniRule"/>
</dbReference>
<dbReference type="GO" id="GO:0006353">
    <property type="term" value="P:DNA-templated transcription termination"/>
    <property type="evidence" value="ECO:0007669"/>
    <property type="project" value="UniProtKB-UniRule"/>
</dbReference>
<dbReference type="GO" id="GO:0031564">
    <property type="term" value="P:transcription antitermination"/>
    <property type="evidence" value="ECO:0007669"/>
    <property type="project" value="UniProtKB-KW"/>
</dbReference>
<dbReference type="Gene3D" id="1.10.940.10">
    <property type="entry name" value="NusB-like"/>
    <property type="match status" value="1"/>
</dbReference>
<dbReference type="HAMAP" id="MF_00073">
    <property type="entry name" value="NusB"/>
    <property type="match status" value="1"/>
</dbReference>
<dbReference type="InterPro" id="IPR035926">
    <property type="entry name" value="NusB-like_sf"/>
</dbReference>
<dbReference type="InterPro" id="IPR011605">
    <property type="entry name" value="NusB_fam"/>
</dbReference>
<dbReference type="InterPro" id="IPR006027">
    <property type="entry name" value="NusB_RsmB_TIM44"/>
</dbReference>
<dbReference type="NCBIfam" id="TIGR01951">
    <property type="entry name" value="nusB"/>
    <property type="match status" value="1"/>
</dbReference>
<dbReference type="NCBIfam" id="NF001223">
    <property type="entry name" value="PRK00202.1-1"/>
    <property type="match status" value="1"/>
</dbReference>
<dbReference type="PANTHER" id="PTHR11078:SF3">
    <property type="entry name" value="ANTITERMINATION NUSB DOMAIN-CONTAINING PROTEIN"/>
    <property type="match status" value="1"/>
</dbReference>
<dbReference type="PANTHER" id="PTHR11078">
    <property type="entry name" value="N UTILIZATION SUBSTANCE PROTEIN B-RELATED"/>
    <property type="match status" value="1"/>
</dbReference>
<dbReference type="Pfam" id="PF01029">
    <property type="entry name" value="NusB"/>
    <property type="match status" value="1"/>
</dbReference>
<dbReference type="SUPFAM" id="SSF48013">
    <property type="entry name" value="NusB-like"/>
    <property type="match status" value="1"/>
</dbReference>
<sequence>MTSVFKDSRRDLRERAFQTLFSLETGGEFIDAAHFAYGYDKTVSEDKVLEVPIFLLNLVNGVVDHKDELDTLISSHLKSGWSLERLTLVDKSLLRLGLYEIKYFDETPDRVALNEIIEIAKKYSDETSAKFVNGLLSQFITNEN</sequence>
<protein>
    <recommendedName>
        <fullName evidence="1">Transcription antitermination protein NusB</fullName>
    </recommendedName>
    <alternativeName>
        <fullName evidence="1">Antitermination factor NusB</fullName>
    </alternativeName>
</protein>
<name>NUSB_STRA3</name>
<keyword id="KW-0694">RNA-binding</keyword>
<keyword id="KW-0804">Transcription</keyword>
<keyword id="KW-0889">Transcription antitermination</keyword>
<keyword id="KW-0805">Transcription regulation</keyword>
<comment type="function">
    <text evidence="1">Involved in transcription antitermination. Required for transcription of ribosomal RNA (rRNA) genes. Binds specifically to the boxA antiterminator sequence of the ribosomal RNA (rrn) operons.</text>
</comment>
<comment type="similarity">
    <text evidence="1">Belongs to the NusB family.</text>
</comment>
<organism>
    <name type="scientific">Streptococcus agalactiae serotype III (strain NEM316)</name>
    <dbReference type="NCBI Taxonomy" id="211110"/>
    <lineage>
        <taxon>Bacteria</taxon>
        <taxon>Bacillati</taxon>
        <taxon>Bacillota</taxon>
        <taxon>Bacilli</taxon>
        <taxon>Lactobacillales</taxon>
        <taxon>Streptococcaceae</taxon>
        <taxon>Streptococcus</taxon>
    </lineage>
</organism>
<feature type="chain" id="PRO_0000176585" description="Transcription antitermination protein NusB">
    <location>
        <begin position="1"/>
        <end position="144"/>
    </location>
</feature>
<evidence type="ECO:0000255" key="1">
    <source>
        <dbReference type="HAMAP-Rule" id="MF_00073"/>
    </source>
</evidence>